<organism>
    <name type="scientific">Caenorhabditis elegans</name>
    <dbReference type="NCBI Taxonomy" id="6239"/>
    <lineage>
        <taxon>Eukaryota</taxon>
        <taxon>Metazoa</taxon>
        <taxon>Ecdysozoa</taxon>
        <taxon>Nematoda</taxon>
        <taxon>Chromadorea</taxon>
        <taxon>Rhabditida</taxon>
        <taxon>Rhabditina</taxon>
        <taxon>Rhabditomorpha</taxon>
        <taxon>Rhabditoidea</taxon>
        <taxon>Rhabditidae</taxon>
        <taxon>Peloderinae</taxon>
        <taxon>Caenorhabditis</taxon>
    </lineage>
</organism>
<gene>
    <name type="primary">osta-3</name>
    <name type="ORF">W01D2.5</name>
</gene>
<dbReference type="EMBL" id="Z83128">
    <property type="protein sequence ID" value="CAB05639.1"/>
    <property type="molecule type" value="Genomic_DNA"/>
</dbReference>
<dbReference type="PIR" id="T26059">
    <property type="entry name" value="T26059"/>
</dbReference>
<dbReference type="RefSeq" id="NP_497071.1">
    <property type="nucleotide sequence ID" value="NM_064670.6"/>
</dbReference>
<dbReference type="BioGRID" id="40421">
    <property type="interactions" value="1"/>
</dbReference>
<dbReference type="FunCoup" id="Q9XU63">
    <property type="interactions" value="82"/>
</dbReference>
<dbReference type="IntAct" id="Q9XU63">
    <property type="interactions" value="1"/>
</dbReference>
<dbReference type="STRING" id="6239.W01D2.5a.2"/>
<dbReference type="GlyCosmos" id="Q9XU63">
    <property type="glycosylation" value="1 site, No reported glycans"/>
</dbReference>
<dbReference type="PaxDb" id="6239-W01D2.5a.1"/>
<dbReference type="EnsemblMetazoa" id="W01D2.5a.1">
    <property type="protein sequence ID" value="W01D2.5a.1"/>
    <property type="gene ID" value="WBGene00012182"/>
</dbReference>
<dbReference type="EnsemblMetazoa" id="W01D2.5a.2">
    <property type="protein sequence ID" value="W01D2.5a.2"/>
    <property type="gene ID" value="WBGene00012182"/>
</dbReference>
<dbReference type="GeneID" id="175140"/>
<dbReference type="KEGG" id="cel:CELE_W01D2.5"/>
<dbReference type="UCSC" id="W01D2.5">
    <property type="organism name" value="c. elegans"/>
</dbReference>
<dbReference type="AGR" id="WB:WBGene00012182"/>
<dbReference type="CTD" id="175140"/>
<dbReference type="WormBase" id="W01D2.5a">
    <property type="protein sequence ID" value="CE20128"/>
    <property type="gene ID" value="WBGene00012182"/>
    <property type="gene designation" value="osta-3"/>
</dbReference>
<dbReference type="eggNOG" id="KOG2641">
    <property type="taxonomic scope" value="Eukaryota"/>
</dbReference>
<dbReference type="InParanoid" id="Q9XU63"/>
<dbReference type="OMA" id="MMMIKEC"/>
<dbReference type="OrthoDB" id="5832279at2759"/>
<dbReference type="PhylomeDB" id="Q9XU63"/>
<dbReference type="SignaLink" id="Q9XU63"/>
<dbReference type="PRO" id="PR:Q9XU63"/>
<dbReference type="Proteomes" id="UP000001940">
    <property type="component" value="Chromosome II"/>
</dbReference>
<dbReference type="Bgee" id="WBGene00012182">
    <property type="expression patterns" value="Expressed in germ line (C elegans) and 4 other cell types or tissues"/>
</dbReference>
<dbReference type="ExpressionAtlas" id="Q9XU63">
    <property type="expression patterns" value="baseline and differential"/>
</dbReference>
<dbReference type="GO" id="GO:0016020">
    <property type="term" value="C:membrane"/>
    <property type="evidence" value="ECO:0000250"/>
    <property type="project" value="UniProtKB"/>
</dbReference>
<dbReference type="GO" id="GO:0005886">
    <property type="term" value="C:plasma membrane"/>
    <property type="evidence" value="ECO:0007669"/>
    <property type="project" value="UniProtKB-SubCell"/>
</dbReference>
<dbReference type="GO" id="GO:0022857">
    <property type="term" value="F:transmembrane transporter activity"/>
    <property type="evidence" value="ECO:0000318"/>
    <property type="project" value="GO_Central"/>
</dbReference>
<dbReference type="InterPro" id="IPR005178">
    <property type="entry name" value="Ostalpha/TMEM184C"/>
</dbReference>
<dbReference type="PANTHER" id="PTHR23423">
    <property type="entry name" value="ORGANIC SOLUTE TRANSPORTER-RELATED"/>
    <property type="match status" value="1"/>
</dbReference>
<dbReference type="Pfam" id="PF03619">
    <property type="entry name" value="Solute_trans_a"/>
    <property type="match status" value="1"/>
</dbReference>
<dbReference type="SMART" id="SM01417">
    <property type="entry name" value="Solute_trans_a"/>
    <property type="match status" value="1"/>
</dbReference>
<comment type="function">
    <text evidence="1">Probable transporter.</text>
</comment>
<comment type="subcellular location">
    <subcellularLocation>
        <location evidence="1">Cell membrane</location>
        <topology evidence="1">Multi-pass membrane protein</topology>
    </subcellularLocation>
</comment>
<comment type="similarity">
    <text evidence="3">Belongs to the OST-alpha family.</text>
</comment>
<proteinExistence type="inferred from homology"/>
<keyword id="KW-1003">Cell membrane</keyword>
<keyword id="KW-0325">Glycoprotein</keyword>
<keyword id="KW-0472">Membrane</keyword>
<keyword id="KW-1185">Reference proteome</keyword>
<keyword id="KW-0812">Transmembrane</keyword>
<keyword id="KW-1133">Transmembrane helix</keyword>
<keyword id="KW-0813">Transport</keyword>
<evidence type="ECO:0000250" key="1"/>
<evidence type="ECO:0000255" key="2"/>
<evidence type="ECO:0000305" key="3"/>
<accession>Q9XU63</accession>
<reference key="1">
    <citation type="journal article" date="1998" name="Science">
        <title>Genome sequence of the nematode C. elegans: a platform for investigating biology.</title>
        <authorList>
            <consortium name="The C. elegans sequencing consortium"/>
        </authorList>
    </citation>
    <scope>NUCLEOTIDE SEQUENCE [LARGE SCALE GENOMIC DNA]</scope>
    <source>
        <strain>Bristol N2</strain>
    </source>
</reference>
<name>OSTA3_CAEEL</name>
<protein>
    <recommendedName>
        <fullName>Organic solute transporter alpha-like protein 3</fullName>
    </recommendedName>
    <alternativeName>
        <fullName>Solute carrier family 51 subunit alpha homolog B</fullName>
    </alternativeName>
</protein>
<feature type="chain" id="PRO_0000331549" description="Organic solute transporter alpha-like protein 3">
    <location>
        <begin position="1"/>
        <end position="348"/>
    </location>
</feature>
<feature type="topological domain" description="Extracellular" evidence="2">
    <location>
        <begin position="1"/>
        <end position="49"/>
    </location>
</feature>
<feature type="transmembrane region" description="Helical" evidence="2">
    <location>
        <begin position="50"/>
        <end position="70"/>
    </location>
</feature>
<feature type="topological domain" description="Cytoplasmic" evidence="2">
    <location>
        <begin position="71"/>
        <end position="84"/>
    </location>
</feature>
<feature type="transmembrane region" description="Helical" evidence="2">
    <location>
        <begin position="85"/>
        <end position="105"/>
    </location>
</feature>
<feature type="topological domain" description="Extracellular" evidence="2">
    <location>
        <begin position="106"/>
        <end position="109"/>
    </location>
</feature>
<feature type="transmembrane region" description="Helical" evidence="2">
    <location>
        <begin position="110"/>
        <end position="130"/>
    </location>
</feature>
<feature type="topological domain" description="Cytoplasmic" evidence="2">
    <location>
        <begin position="131"/>
        <end position="180"/>
    </location>
</feature>
<feature type="transmembrane region" description="Helical" evidence="2">
    <location>
        <begin position="181"/>
        <end position="201"/>
    </location>
</feature>
<feature type="topological domain" description="Extracellular" evidence="2">
    <location>
        <begin position="202"/>
        <end position="213"/>
    </location>
</feature>
<feature type="transmembrane region" description="Helical" evidence="2">
    <location>
        <begin position="214"/>
        <end position="234"/>
    </location>
</feature>
<feature type="topological domain" description="Cytoplasmic" evidence="2">
    <location>
        <begin position="235"/>
        <end position="240"/>
    </location>
</feature>
<feature type="transmembrane region" description="Helical" evidence="2">
    <location>
        <begin position="241"/>
        <end position="261"/>
    </location>
</feature>
<feature type="topological domain" description="Extracellular" evidence="2">
    <location>
        <begin position="262"/>
        <end position="291"/>
    </location>
</feature>
<feature type="transmembrane region" description="Helical" evidence="2">
    <location>
        <begin position="292"/>
        <end position="312"/>
    </location>
</feature>
<feature type="topological domain" description="Cytoplasmic" evidence="2">
    <location>
        <begin position="313"/>
        <end position="348"/>
    </location>
</feature>
<feature type="glycosylation site" description="N-linked (GlcNAc...) asparagine" evidence="2">
    <location>
        <position position="26"/>
    </location>
</feature>
<sequence length="348" mass="39464">MAKEHGAMRSVLNLIGSVMLPQDTSNCSDRHDTPSAPEFLSHLQPFQTVLLSIASFSTTIVLCLSLIHWFYVYKYVSIEKRRNKLYWLIAVFPVACSCSFIAMCVPRTAVILTCIGVLYYLMCLFVIVSLARHLFGGRESFSTCLQYDDRPIDFRSPPFCCIIPKLPTARSTEKNIRRLEWCVLQAPIVRSIIIFLDVVAVAEMREDATPYIRYSDMASLCSLLLAIFGVHTLARVTSNKLSAYCFMSMFRLVDISLLFFSAQQPMIFQNVLLRFNLISCGPLLNAQENAYFVCNFIITCEMLLLSVLATWLLAPRHNAMFDAYRPSMALSETTASLNETEQSMILDH</sequence>